<gene>
    <name evidence="1" type="primary">rsmH</name>
    <name type="synonym">mraW</name>
    <name type="ordered locus">BCAH187_A3971</name>
</gene>
<name>RSMH_BACC7</name>
<evidence type="ECO:0000255" key="1">
    <source>
        <dbReference type="HAMAP-Rule" id="MF_01007"/>
    </source>
</evidence>
<organism>
    <name type="scientific">Bacillus cereus (strain AH187)</name>
    <dbReference type="NCBI Taxonomy" id="405534"/>
    <lineage>
        <taxon>Bacteria</taxon>
        <taxon>Bacillati</taxon>
        <taxon>Bacillota</taxon>
        <taxon>Bacilli</taxon>
        <taxon>Bacillales</taxon>
        <taxon>Bacillaceae</taxon>
        <taxon>Bacillus</taxon>
        <taxon>Bacillus cereus group</taxon>
    </lineage>
</organism>
<dbReference type="EC" id="2.1.1.199" evidence="1"/>
<dbReference type="EMBL" id="CP001177">
    <property type="protein sequence ID" value="ACJ81953.1"/>
    <property type="molecule type" value="Genomic_DNA"/>
</dbReference>
<dbReference type="SMR" id="B7HM39"/>
<dbReference type="KEGG" id="bcr:BCAH187_A3971"/>
<dbReference type="HOGENOM" id="CLU_038422_2_0_9"/>
<dbReference type="Proteomes" id="UP000002214">
    <property type="component" value="Chromosome"/>
</dbReference>
<dbReference type="GO" id="GO:0005737">
    <property type="term" value="C:cytoplasm"/>
    <property type="evidence" value="ECO:0007669"/>
    <property type="project" value="UniProtKB-SubCell"/>
</dbReference>
<dbReference type="GO" id="GO:0071424">
    <property type="term" value="F:rRNA (cytosine-N4-)-methyltransferase activity"/>
    <property type="evidence" value="ECO:0007669"/>
    <property type="project" value="UniProtKB-UniRule"/>
</dbReference>
<dbReference type="GO" id="GO:0070475">
    <property type="term" value="P:rRNA base methylation"/>
    <property type="evidence" value="ECO:0007669"/>
    <property type="project" value="UniProtKB-UniRule"/>
</dbReference>
<dbReference type="FunFam" id="1.10.150.170:FF:000001">
    <property type="entry name" value="Ribosomal RNA small subunit methyltransferase H"/>
    <property type="match status" value="1"/>
</dbReference>
<dbReference type="Gene3D" id="1.10.150.170">
    <property type="entry name" value="Putative methyltransferase TM0872, insert domain"/>
    <property type="match status" value="1"/>
</dbReference>
<dbReference type="Gene3D" id="3.40.50.150">
    <property type="entry name" value="Vaccinia Virus protein VP39"/>
    <property type="match status" value="1"/>
</dbReference>
<dbReference type="HAMAP" id="MF_01007">
    <property type="entry name" value="16SrRNA_methyltr_H"/>
    <property type="match status" value="1"/>
</dbReference>
<dbReference type="InterPro" id="IPR002903">
    <property type="entry name" value="RsmH"/>
</dbReference>
<dbReference type="InterPro" id="IPR023397">
    <property type="entry name" value="SAM-dep_MeTrfase_MraW_recog"/>
</dbReference>
<dbReference type="InterPro" id="IPR029063">
    <property type="entry name" value="SAM-dependent_MTases_sf"/>
</dbReference>
<dbReference type="NCBIfam" id="TIGR00006">
    <property type="entry name" value="16S rRNA (cytosine(1402)-N(4))-methyltransferase RsmH"/>
    <property type="match status" value="1"/>
</dbReference>
<dbReference type="PANTHER" id="PTHR11265:SF0">
    <property type="entry name" value="12S RRNA N4-METHYLCYTIDINE METHYLTRANSFERASE"/>
    <property type="match status" value="1"/>
</dbReference>
<dbReference type="PANTHER" id="PTHR11265">
    <property type="entry name" value="S-ADENOSYL-METHYLTRANSFERASE MRAW"/>
    <property type="match status" value="1"/>
</dbReference>
<dbReference type="Pfam" id="PF01795">
    <property type="entry name" value="Methyltransf_5"/>
    <property type="match status" value="1"/>
</dbReference>
<dbReference type="PIRSF" id="PIRSF004486">
    <property type="entry name" value="MraW"/>
    <property type="match status" value="1"/>
</dbReference>
<dbReference type="SUPFAM" id="SSF81799">
    <property type="entry name" value="Putative methyltransferase TM0872, insert domain"/>
    <property type="match status" value="1"/>
</dbReference>
<dbReference type="SUPFAM" id="SSF53335">
    <property type="entry name" value="S-adenosyl-L-methionine-dependent methyltransferases"/>
    <property type="match status" value="1"/>
</dbReference>
<proteinExistence type="inferred from homology"/>
<sequence>MFNHVTVLLKETVDGLDIKPGGTYVDCTLGGGGHSSYLLSQLTEGGRLIAFDQDEIAIQNAKEKFSSYGEQFITVRSNFRYLSEKLQELGITEVDGILFDLGVSSPQLDTPERGFSYHHDAPLDMRMDQDAPLTAYDVVNSWSYEQLVRIFFQYGEEKFSKQIARKIEAYRENKAIETTGELVELIKEGIPAPARRTGGHPAKRVFQAIRIAVNDELKVFEEALESAIEMVKPGGRVSVITFHSLEDRICKTTFKRNSTTPQLPPGLPIIPDEFKPKLKLITRKPILPSDIELEENNRARSAKLRIAEKR</sequence>
<feature type="chain" id="PRO_0000386729" description="Ribosomal RNA small subunit methyltransferase H">
    <location>
        <begin position="1"/>
        <end position="310"/>
    </location>
</feature>
<feature type="binding site" evidence="1">
    <location>
        <begin position="32"/>
        <end position="34"/>
    </location>
    <ligand>
        <name>S-adenosyl-L-methionine</name>
        <dbReference type="ChEBI" id="CHEBI:59789"/>
    </ligand>
</feature>
<feature type="binding site" evidence="1">
    <location>
        <position position="52"/>
    </location>
    <ligand>
        <name>S-adenosyl-L-methionine</name>
        <dbReference type="ChEBI" id="CHEBI:59789"/>
    </ligand>
</feature>
<feature type="binding site" evidence="1">
    <location>
        <position position="79"/>
    </location>
    <ligand>
        <name>S-adenosyl-L-methionine</name>
        <dbReference type="ChEBI" id="CHEBI:59789"/>
    </ligand>
</feature>
<feature type="binding site" evidence="1">
    <location>
        <position position="100"/>
    </location>
    <ligand>
        <name>S-adenosyl-L-methionine</name>
        <dbReference type="ChEBI" id="CHEBI:59789"/>
    </ligand>
</feature>
<feature type="binding site" evidence="1">
    <location>
        <position position="107"/>
    </location>
    <ligand>
        <name>S-adenosyl-L-methionine</name>
        <dbReference type="ChEBI" id="CHEBI:59789"/>
    </ligand>
</feature>
<reference key="1">
    <citation type="submission" date="2008-10" db="EMBL/GenBank/DDBJ databases">
        <title>Genome sequence of Bacillus cereus AH187.</title>
        <authorList>
            <person name="Dodson R.J."/>
            <person name="Durkin A.S."/>
            <person name="Rosovitz M.J."/>
            <person name="Rasko D.A."/>
            <person name="Kolsto A.B."/>
            <person name="Okstad O.A."/>
            <person name="Ravel J."/>
            <person name="Sutton G."/>
        </authorList>
    </citation>
    <scope>NUCLEOTIDE SEQUENCE [LARGE SCALE GENOMIC DNA]</scope>
    <source>
        <strain>AH187</strain>
    </source>
</reference>
<keyword id="KW-0963">Cytoplasm</keyword>
<keyword id="KW-0489">Methyltransferase</keyword>
<keyword id="KW-0698">rRNA processing</keyword>
<keyword id="KW-0949">S-adenosyl-L-methionine</keyword>
<keyword id="KW-0808">Transferase</keyword>
<comment type="function">
    <text evidence="1">Specifically methylates the N4 position of cytidine in position 1402 (C1402) of 16S rRNA.</text>
</comment>
<comment type="catalytic activity">
    <reaction evidence="1">
        <text>cytidine(1402) in 16S rRNA + S-adenosyl-L-methionine = N(4)-methylcytidine(1402) in 16S rRNA + S-adenosyl-L-homocysteine + H(+)</text>
        <dbReference type="Rhea" id="RHEA:42928"/>
        <dbReference type="Rhea" id="RHEA-COMP:10286"/>
        <dbReference type="Rhea" id="RHEA-COMP:10287"/>
        <dbReference type="ChEBI" id="CHEBI:15378"/>
        <dbReference type="ChEBI" id="CHEBI:57856"/>
        <dbReference type="ChEBI" id="CHEBI:59789"/>
        <dbReference type="ChEBI" id="CHEBI:74506"/>
        <dbReference type="ChEBI" id="CHEBI:82748"/>
        <dbReference type="EC" id="2.1.1.199"/>
    </reaction>
</comment>
<comment type="subcellular location">
    <subcellularLocation>
        <location evidence="1">Cytoplasm</location>
    </subcellularLocation>
</comment>
<comment type="similarity">
    <text evidence="1">Belongs to the methyltransferase superfamily. RsmH family.</text>
</comment>
<accession>B7HM39</accession>
<protein>
    <recommendedName>
        <fullName evidence="1">Ribosomal RNA small subunit methyltransferase H</fullName>
        <ecNumber evidence="1">2.1.1.199</ecNumber>
    </recommendedName>
    <alternativeName>
        <fullName evidence="1">16S rRNA m(4)C1402 methyltransferase</fullName>
    </alternativeName>
    <alternativeName>
        <fullName evidence="1">rRNA (cytosine-N(4)-)-methyltransferase RsmH</fullName>
    </alternativeName>
</protein>